<evidence type="ECO:0000255" key="1">
    <source>
        <dbReference type="HAMAP-Rule" id="MF_01719"/>
    </source>
</evidence>
<protein>
    <recommendedName>
        <fullName evidence="1">Methionine import ATP-binding protein MetN</fullName>
        <ecNumber evidence="1">7.4.2.11</ecNumber>
    </recommendedName>
</protein>
<feature type="chain" id="PRO_0000270279" description="Methionine import ATP-binding protein MetN">
    <location>
        <begin position="1"/>
        <end position="341"/>
    </location>
</feature>
<feature type="domain" description="ABC transporter" evidence="1">
    <location>
        <begin position="9"/>
        <end position="247"/>
    </location>
</feature>
<feature type="binding site" evidence="1">
    <location>
        <begin position="41"/>
        <end position="48"/>
    </location>
    <ligand>
        <name>ATP</name>
        <dbReference type="ChEBI" id="CHEBI:30616"/>
    </ligand>
</feature>
<dbReference type="EC" id="7.4.2.11" evidence="1"/>
<dbReference type="EMBL" id="CR848038">
    <property type="protein sequence ID" value="CAH63940.1"/>
    <property type="molecule type" value="Genomic_DNA"/>
</dbReference>
<dbReference type="RefSeq" id="WP_011097112.1">
    <property type="nucleotide sequence ID" value="NC_004552.2"/>
</dbReference>
<dbReference type="SMR" id="Q5L5Z1"/>
<dbReference type="KEGG" id="cab:CAB488"/>
<dbReference type="eggNOG" id="COG1135">
    <property type="taxonomic scope" value="Bacteria"/>
</dbReference>
<dbReference type="HOGENOM" id="CLU_000604_1_3_0"/>
<dbReference type="OrthoDB" id="9804199at2"/>
<dbReference type="Proteomes" id="UP000001012">
    <property type="component" value="Chromosome"/>
</dbReference>
<dbReference type="GO" id="GO:0005886">
    <property type="term" value="C:plasma membrane"/>
    <property type="evidence" value="ECO:0007669"/>
    <property type="project" value="UniProtKB-SubCell"/>
</dbReference>
<dbReference type="GO" id="GO:0033232">
    <property type="term" value="F:ABC-type D-methionine transporter activity"/>
    <property type="evidence" value="ECO:0007669"/>
    <property type="project" value="UniProtKB-EC"/>
</dbReference>
<dbReference type="GO" id="GO:0005524">
    <property type="term" value="F:ATP binding"/>
    <property type="evidence" value="ECO:0007669"/>
    <property type="project" value="UniProtKB-KW"/>
</dbReference>
<dbReference type="GO" id="GO:0016887">
    <property type="term" value="F:ATP hydrolysis activity"/>
    <property type="evidence" value="ECO:0007669"/>
    <property type="project" value="InterPro"/>
</dbReference>
<dbReference type="Gene3D" id="3.30.70.260">
    <property type="match status" value="1"/>
</dbReference>
<dbReference type="Gene3D" id="3.40.50.300">
    <property type="entry name" value="P-loop containing nucleotide triphosphate hydrolases"/>
    <property type="match status" value="1"/>
</dbReference>
<dbReference type="InterPro" id="IPR003593">
    <property type="entry name" value="AAA+_ATPase"/>
</dbReference>
<dbReference type="InterPro" id="IPR003439">
    <property type="entry name" value="ABC_transporter-like_ATP-bd"/>
</dbReference>
<dbReference type="InterPro" id="IPR017871">
    <property type="entry name" value="ABC_transporter-like_CS"/>
</dbReference>
<dbReference type="InterPro" id="IPR045865">
    <property type="entry name" value="ACT-like_dom_sf"/>
</dbReference>
<dbReference type="InterPro" id="IPR050086">
    <property type="entry name" value="MetN_ABC_transporter-like"/>
</dbReference>
<dbReference type="InterPro" id="IPR018449">
    <property type="entry name" value="NIL_domain"/>
</dbReference>
<dbReference type="InterPro" id="IPR027417">
    <property type="entry name" value="P-loop_NTPase"/>
</dbReference>
<dbReference type="PANTHER" id="PTHR43166">
    <property type="entry name" value="AMINO ACID IMPORT ATP-BINDING PROTEIN"/>
    <property type="match status" value="1"/>
</dbReference>
<dbReference type="PANTHER" id="PTHR43166:SF30">
    <property type="entry name" value="METHIONINE IMPORT ATP-BINDING PROTEIN METN"/>
    <property type="match status" value="1"/>
</dbReference>
<dbReference type="Pfam" id="PF00005">
    <property type="entry name" value="ABC_tran"/>
    <property type="match status" value="1"/>
</dbReference>
<dbReference type="Pfam" id="PF09383">
    <property type="entry name" value="NIL"/>
    <property type="match status" value="1"/>
</dbReference>
<dbReference type="SMART" id="SM00382">
    <property type="entry name" value="AAA"/>
    <property type="match status" value="1"/>
</dbReference>
<dbReference type="SMART" id="SM00930">
    <property type="entry name" value="NIL"/>
    <property type="match status" value="1"/>
</dbReference>
<dbReference type="SUPFAM" id="SSF55021">
    <property type="entry name" value="ACT-like"/>
    <property type="match status" value="1"/>
</dbReference>
<dbReference type="SUPFAM" id="SSF52540">
    <property type="entry name" value="P-loop containing nucleoside triphosphate hydrolases"/>
    <property type="match status" value="1"/>
</dbReference>
<dbReference type="PROSITE" id="PS00211">
    <property type="entry name" value="ABC_TRANSPORTER_1"/>
    <property type="match status" value="1"/>
</dbReference>
<dbReference type="PROSITE" id="PS50893">
    <property type="entry name" value="ABC_TRANSPORTER_2"/>
    <property type="match status" value="1"/>
</dbReference>
<dbReference type="PROSITE" id="PS51264">
    <property type="entry name" value="METN"/>
    <property type="match status" value="1"/>
</dbReference>
<reference key="1">
    <citation type="journal article" date="2005" name="Genome Res.">
        <title>The Chlamydophila abortus genome sequence reveals an array of variable proteins that contribute to interspecies variation.</title>
        <authorList>
            <person name="Thomson N.R."/>
            <person name="Yeats C."/>
            <person name="Bell K."/>
            <person name="Holden M.T.G."/>
            <person name="Bentley S.D."/>
            <person name="Livingstone M."/>
            <person name="Cerdeno-Tarraga A.-M."/>
            <person name="Harris B."/>
            <person name="Doggett J."/>
            <person name="Ormond D."/>
            <person name="Mungall K."/>
            <person name="Clarke K."/>
            <person name="Feltwell T."/>
            <person name="Hance Z."/>
            <person name="Sanders M."/>
            <person name="Quail M.A."/>
            <person name="Price C."/>
            <person name="Barrell B.G."/>
            <person name="Parkhill J."/>
            <person name="Longbottom D."/>
        </authorList>
    </citation>
    <scope>NUCLEOTIDE SEQUENCE [LARGE SCALE GENOMIC DNA]</scope>
    <source>
        <strain>DSM 27085 / S26/3</strain>
    </source>
</reference>
<sequence length="341" mass="37858">MFNQNSPIISVEQLNKEIANHRILHRISFSVYPGEIVGIIGHSGSGKSTLLRCLDFLIEPTSGSISIAGFHTSSPIEKISRTAFAKRVAYVSQSCGLFLAKTVFENIAYPLKIRCPEMTKALIEEKVDDVLHFFNLYERKHAYPSRLSGGQKQKVAIAIAIVSDPRVLLCDEITSALDPRSTEDVVDKLSQLNEERGITQVFVSHEIEIVKKLCCQTLVMHQGSIEESGPTEQLFLNPQSAITEELFHMQSIAKGIYEHGENEEILRLGFPKGLAVQGMISQLIQSGGISINILSGDIHLFRKTPLGFLIVALSGGKEQRDWAKSSLREKGVIVKQFQKSR</sequence>
<accession>Q5L5Z1</accession>
<gene>
    <name evidence="1" type="primary">metN</name>
    <name type="ordered locus">CAB488</name>
</gene>
<keyword id="KW-0029">Amino-acid transport</keyword>
<keyword id="KW-0067">ATP-binding</keyword>
<keyword id="KW-0997">Cell inner membrane</keyword>
<keyword id="KW-1003">Cell membrane</keyword>
<keyword id="KW-0472">Membrane</keyword>
<keyword id="KW-0547">Nucleotide-binding</keyword>
<keyword id="KW-1278">Translocase</keyword>
<keyword id="KW-0813">Transport</keyword>
<proteinExistence type="inferred from homology"/>
<comment type="function">
    <text evidence="1">Part of the ABC transporter complex MetNIQ involved in methionine import. Responsible for energy coupling to the transport system.</text>
</comment>
<comment type="catalytic activity">
    <reaction evidence="1">
        <text>L-methionine(out) + ATP + H2O = L-methionine(in) + ADP + phosphate + H(+)</text>
        <dbReference type="Rhea" id="RHEA:29779"/>
        <dbReference type="ChEBI" id="CHEBI:15377"/>
        <dbReference type="ChEBI" id="CHEBI:15378"/>
        <dbReference type="ChEBI" id="CHEBI:30616"/>
        <dbReference type="ChEBI" id="CHEBI:43474"/>
        <dbReference type="ChEBI" id="CHEBI:57844"/>
        <dbReference type="ChEBI" id="CHEBI:456216"/>
        <dbReference type="EC" id="7.4.2.11"/>
    </reaction>
</comment>
<comment type="catalytic activity">
    <reaction evidence="1">
        <text>D-methionine(out) + ATP + H2O = D-methionine(in) + ADP + phosphate + H(+)</text>
        <dbReference type="Rhea" id="RHEA:29767"/>
        <dbReference type="ChEBI" id="CHEBI:15377"/>
        <dbReference type="ChEBI" id="CHEBI:15378"/>
        <dbReference type="ChEBI" id="CHEBI:30616"/>
        <dbReference type="ChEBI" id="CHEBI:43474"/>
        <dbReference type="ChEBI" id="CHEBI:57932"/>
        <dbReference type="ChEBI" id="CHEBI:456216"/>
        <dbReference type="EC" id="7.4.2.11"/>
    </reaction>
</comment>
<comment type="subunit">
    <text evidence="1">The complex is composed of two ATP-binding proteins (MetN), two transmembrane proteins (MetI) and a solute-binding protein (MetQ).</text>
</comment>
<comment type="subcellular location">
    <subcellularLocation>
        <location evidence="1">Cell inner membrane</location>
        <topology evidence="1">Peripheral membrane protein</topology>
    </subcellularLocation>
</comment>
<comment type="similarity">
    <text evidence="1">Belongs to the ABC transporter superfamily. Methionine importer (TC 3.A.1.24) family.</text>
</comment>
<name>METN_CHLAB</name>
<organism>
    <name type="scientific">Chlamydia abortus (strain DSM 27085 / S26/3)</name>
    <name type="common">Chlamydophila abortus</name>
    <dbReference type="NCBI Taxonomy" id="218497"/>
    <lineage>
        <taxon>Bacteria</taxon>
        <taxon>Pseudomonadati</taxon>
        <taxon>Chlamydiota</taxon>
        <taxon>Chlamydiia</taxon>
        <taxon>Chlamydiales</taxon>
        <taxon>Chlamydiaceae</taxon>
        <taxon>Chlamydia/Chlamydophila group</taxon>
        <taxon>Chlamydia</taxon>
    </lineage>
</organism>